<evidence type="ECO:0000255" key="1">
    <source>
        <dbReference type="HAMAP-Rule" id="MF_01220"/>
    </source>
</evidence>
<proteinExistence type="inferred from homology"/>
<organism>
    <name type="scientific">Synechocystis sp. (strain ATCC 27184 / PCC 6803 / Kazusa)</name>
    <dbReference type="NCBI Taxonomy" id="1111708"/>
    <lineage>
        <taxon>Bacteria</taxon>
        <taxon>Bacillati</taxon>
        <taxon>Cyanobacteriota</taxon>
        <taxon>Cyanophyceae</taxon>
        <taxon>Synechococcales</taxon>
        <taxon>Merismopediaceae</taxon>
        <taxon>Synechocystis</taxon>
    </lineage>
</organism>
<comment type="function">
    <text evidence="1">Catalyzes the reversible phosphorylation of UMP to UDP.</text>
</comment>
<comment type="catalytic activity">
    <reaction evidence="1">
        <text>UMP + ATP = UDP + ADP</text>
        <dbReference type="Rhea" id="RHEA:24400"/>
        <dbReference type="ChEBI" id="CHEBI:30616"/>
        <dbReference type="ChEBI" id="CHEBI:57865"/>
        <dbReference type="ChEBI" id="CHEBI:58223"/>
        <dbReference type="ChEBI" id="CHEBI:456216"/>
        <dbReference type="EC" id="2.7.4.22"/>
    </reaction>
</comment>
<comment type="activity regulation">
    <text evidence="1">Allosterically activated by GTP. Inhibited by UTP.</text>
</comment>
<comment type="pathway">
    <text evidence="1">Pyrimidine metabolism; CTP biosynthesis via de novo pathway; UDP from UMP (UMPK route): step 1/1.</text>
</comment>
<comment type="subunit">
    <text evidence="1">Homohexamer.</text>
</comment>
<comment type="subcellular location">
    <subcellularLocation>
        <location evidence="1">Cytoplasm</location>
    </subcellularLocation>
</comment>
<comment type="similarity">
    <text evidence="1">Belongs to the UMP kinase family.</text>
</comment>
<feature type="chain" id="PRO_0000143898" description="Uridylate kinase">
    <location>
        <begin position="1"/>
        <end position="260"/>
    </location>
</feature>
<feature type="region of interest" description="Involved in allosteric activation by GTP" evidence="1">
    <location>
        <begin position="37"/>
        <end position="42"/>
    </location>
</feature>
<feature type="binding site" evidence="1">
    <location>
        <begin position="29"/>
        <end position="32"/>
    </location>
    <ligand>
        <name>ATP</name>
        <dbReference type="ChEBI" id="CHEBI:30616"/>
    </ligand>
</feature>
<feature type="binding site" evidence="1">
    <location>
        <position position="71"/>
    </location>
    <ligand>
        <name>UMP</name>
        <dbReference type="ChEBI" id="CHEBI:57865"/>
    </ligand>
</feature>
<feature type="binding site" evidence="1">
    <location>
        <position position="72"/>
    </location>
    <ligand>
        <name>ATP</name>
        <dbReference type="ChEBI" id="CHEBI:30616"/>
    </ligand>
</feature>
<feature type="binding site" evidence="1">
    <location>
        <position position="76"/>
    </location>
    <ligand>
        <name>ATP</name>
        <dbReference type="ChEBI" id="CHEBI:30616"/>
    </ligand>
</feature>
<feature type="binding site" evidence="1">
    <location>
        <position position="91"/>
    </location>
    <ligand>
        <name>UMP</name>
        <dbReference type="ChEBI" id="CHEBI:57865"/>
    </ligand>
</feature>
<feature type="binding site" evidence="1">
    <location>
        <begin position="152"/>
        <end position="159"/>
    </location>
    <ligand>
        <name>UMP</name>
        <dbReference type="ChEBI" id="CHEBI:57865"/>
    </ligand>
</feature>
<feature type="binding site" evidence="1">
    <location>
        <position position="179"/>
    </location>
    <ligand>
        <name>ATP</name>
        <dbReference type="ChEBI" id="CHEBI:30616"/>
    </ligand>
</feature>
<feature type="binding site" evidence="1">
    <location>
        <position position="185"/>
    </location>
    <ligand>
        <name>ATP</name>
        <dbReference type="ChEBI" id="CHEBI:30616"/>
    </ligand>
</feature>
<feature type="binding site" evidence="1">
    <location>
        <position position="188"/>
    </location>
    <ligand>
        <name>ATP</name>
        <dbReference type="ChEBI" id="CHEBI:30616"/>
    </ligand>
</feature>
<keyword id="KW-0021">Allosteric enzyme</keyword>
<keyword id="KW-0067">ATP-binding</keyword>
<keyword id="KW-0963">Cytoplasm</keyword>
<keyword id="KW-0418">Kinase</keyword>
<keyword id="KW-0547">Nucleotide-binding</keyword>
<keyword id="KW-0665">Pyrimidine biosynthesis</keyword>
<keyword id="KW-1185">Reference proteome</keyword>
<keyword id="KW-0808">Transferase</keyword>
<protein>
    <recommendedName>
        <fullName evidence="1">Uridylate kinase</fullName>
        <shortName evidence="1">UK</shortName>
        <ecNumber evidence="1">2.7.4.22</ecNumber>
    </recommendedName>
    <alternativeName>
        <fullName evidence="1">Uridine monophosphate kinase</fullName>
        <shortName evidence="1">UMP kinase</shortName>
        <shortName evidence="1">UMPK</shortName>
    </alternativeName>
</protein>
<gene>
    <name evidence="1" type="primary">pyrH</name>
    <name type="ordered locus">sll0144</name>
</gene>
<dbReference type="EC" id="2.7.4.22" evidence="1"/>
<dbReference type="EMBL" id="BA000022">
    <property type="protein sequence ID" value="BAA18558.1"/>
    <property type="molecule type" value="Genomic_DNA"/>
</dbReference>
<dbReference type="PIR" id="S76429">
    <property type="entry name" value="S76429"/>
</dbReference>
<dbReference type="SMR" id="P74457"/>
<dbReference type="FunCoup" id="P74457">
    <property type="interactions" value="567"/>
</dbReference>
<dbReference type="IntAct" id="P74457">
    <property type="interactions" value="3"/>
</dbReference>
<dbReference type="STRING" id="1148.gene:10499440"/>
<dbReference type="PaxDb" id="1148-1653646"/>
<dbReference type="EnsemblBacteria" id="BAA18558">
    <property type="protein sequence ID" value="BAA18558"/>
    <property type="gene ID" value="BAA18558"/>
</dbReference>
<dbReference type="KEGG" id="syn:sll0144"/>
<dbReference type="eggNOG" id="COG0528">
    <property type="taxonomic scope" value="Bacteria"/>
</dbReference>
<dbReference type="InParanoid" id="P74457"/>
<dbReference type="PhylomeDB" id="P74457"/>
<dbReference type="UniPathway" id="UPA00159">
    <property type="reaction ID" value="UER00275"/>
</dbReference>
<dbReference type="Proteomes" id="UP000001425">
    <property type="component" value="Chromosome"/>
</dbReference>
<dbReference type="GO" id="GO:0005737">
    <property type="term" value="C:cytoplasm"/>
    <property type="evidence" value="ECO:0007669"/>
    <property type="project" value="UniProtKB-SubCell"/>
</dbReference>
<dbReference type="GO" id="GO:0005524">
    <property type="term" value="F:ATP binding"/>
    <property type="evidence" value="ECO:0007669"/>
    <property type="project" value="UniProtKB-KW"/>
</dbReference>
<dbReference type="GO" id="GO:0033862">
    <property type="term" value="F:UMP kinase activity"/>
    <property type="evidence" value="ECO:0000318"/>
    <property type="project" value="GO_Central"/>
</dbReference>
<dbReference type="GO" id="GO:0044210">
    <property type="term" value="P:'de novo' CTP biosynthetic process"/>
    <property type="evidence" value="ECO:0007669"/>
    <property type="project" value="UniProtKB-UniRule"/>
</dbReference>
<dbReference type="GO" id="GO:0006225">
    <property type="term" value="P:UDP biosynthetic process"/>
    <property type="evidence" value="ECO:0000318"/>
    <property type="project" value="GO_Central"/>
</dbReference>
<dbReference type="CDD" id="cd04254">
    <property type="entry name" value="AAK_UMPK-PyrH-Ec"/>
    <property type="match status" value="1"/>
</dbReference>
<dbReference type="FunFam" id="3.40.1160.10:FF:000001">
    <property type="entry name" value="Uridylate kinase"/>
    <property type="match status" value="1"/>
</dbReference>
<dbReference type="Gene3D" id="3.40.1160.10">
    <property type="entry name" value="Acetylglutamate kinase-like"/>
    <property type="match status" value="1"/>
</dbReference>
<dbReference type="HAMAP" id="MF_01220_B">
    <property type="entry name" value="PyrH_B"/>
    <property type="match status" value="1"/>
</dbReference>
<dbReference type="InterPro" id="IPR036393">
    <property type="entry name" value="AceGlu_kinase-like_sf"/>
</dbReference>
<dbReference type="InterPro" id="IPR001048">
    <property type="entry name" value="Asp/Glu/Uridylate_kinase"/>
</dbReference>
<dbReference type="InterPro" id="IPR011817">
    <property type="entry name" value="Uridylate_kinase"/>
</dbReference>
<dbReference type="InterPro" id="IPR015963">
    <property type="entry name" value="Uridylate_kinase_bac"/>
</dbReference>
<dbReference type="NCBIfam" id="TIGR02075">
    <property type="entry name" value="pyrH_bact"/>
    <property type="match status" value="1"/>
</dbReference>
<dbReference type="PANTHER" id="PTHR42833">
    <property type="entry name" value="URIDYLATE KINASE"/>
    <property type="match status" value="1"/>
</dbReference>
<dbReference type="PANTHER" id="PTHR42833:SF4">
    <property type="entry name" value="URIDYLATE KINASE PUMPKIN, CHLOROPLASTIC"/>
    <property type="match status" value="1"/>
</dbReference>
<dbReference type="Pfam" id="PF00696">
    <property type="entry name" value="AA_kinase"/>
    <property type="match status" value="1"/>
</dbReference>
<dbReference type="PIRSF" id="PIRSF005650">
    <property type="entry name" value="Uridylate_kin"/>
    <property type="match status" value="1"/>
</dbReference>
<dbReference type="SUPFAM" id="SSF53633">
    <property type="entry name" value="Carbamate kinase-like"/>
    <property type="match status" value="1"/>
</dbReference>
<sequence length="260" mass="27651">MGGILRLTLIPCLYINGDGGMSYQRVLLKLSGEALMGDLGYGIDPAVVGTIAQEIKDVLQAGVQLAIVVGGGNIFRGVKASAAGMDRATADYIGMIATVMNAMTLQDALEQMDIPTRVLTAIAMQEVAEPYIRRRAIRHLEKGRVVIFGAGSGNPFFTTDTTAALRAAEIDAEVVFKATKVDGVYDSDPKTNPNARRFTTLTYSHVLAEDLKVMDSTAIALCKDNNIPIMIFDLGVPGNIVRAIKGEAVGTLVGENCEVS</sequence>
<name>PYRH_SYNY3</name>
<reference key="1">
    <citation type="journal article" date="1996" name="DNA Res.">
        <title>Sequence analysis of the genome of the unicellular cyanobacterium Synechocystis sp. strain PCC6803. II. Sequence determination of the entire genome and assignment of potential protein-coding regions.</title>
        <authorList>
            <person name="Kaneko T."/>
            <person name="Sato S."/>
            <person name="Kotani H."/>
            <person name="Tanaka A."/>
            <person name="Asamizu E."/>
            <person name="Nakamura Y."/>
            <person name="Miyajima N."/>
            <person name="Hirosawa M."/>
            <person name="Sugiura M."/>
            <person name="Sasamoto S."/>
            <person name="Kimura T."/>
            <person name="Hosouchi T."/>
            <person name="Matsuno A."/>
            <person name="Muraki A."/>
            <person name="Nakazaki N."/>
            <person name="Naruo K."/>
            <person name="Okumura S."/>
            <person name="Shimpo S."/>
            <person name="Takeuchi C."/>
            <person name="Wada T."/>
            <person name="Watanabe A."/>
            <person name="Yamada M."/>
            <person name="Yasuda M."/>
            <person name="Tabata S."/>
        </authorList>
    </citation>
    <scope>NUCLEOTIDE SEQUENCE [LARGE SCALE GENOMIC DNA]</scope>
    <source>
        <strain>ATCC 27184 / PCC 6803 / Kazusa</strain>
    </source>
</reference>
<accession>P74457</accession>